<organism>
    <name type="scientific">Salmonella typhi</name>
    <dbReference type="NCBI Taxonomy" id="90370"/>
    <lineage>
        <taxon>Bacteria</taxon>
        <taxon>Pseudomonadati</taxon>
        <taxon>Pseudomonadota</taxon>
        <taxon>Gammaproteobacteria</taxon>
        <taxon>Enterobacterales</taxon>
        <taxon>Enterobacteriaceae</taxon>
        <taxon>Salmonella</taxon>
    </lineage>
</organism>
<protein>
    <recommendedName>
        <fullName>Flagellar hook-associated protein 1</fullName>
        <shortName>HAP1</shortName>
    </recommendedName>
</protein>
<name>FLGK_SALTI</name>
<proteinExistence type="inferred from homology"/>
<feature type="initiator methionine" description="Removed" evidence="1">
    <location>
        <position position="1"/>
    </location>
</feature>
<feature type="chain" id="PRO_0000180863" description="Flagellar hook-associated protein 1">
    <location>
        <begin position="2"/>
        <end position="553"/>
    </location>
</feature>
<accession>P0A1J6</accession>
<accession>P15932</accession>
<sequence length="553" mass="59109">MSSLINHAMSGLNAAQAALNTVSNNINNYNVAGYTRQTTILAQANSTLGAGGWIGNGVYVSGVQREYDAFITNQLRGAQNQSSGLTTRYEQMSKIDNLLADKSSSLSGSLQSFFTSLQTLVSNAEDPAARQALIGKAEGLVNQFKTTDQYLRDQDKQVNIAIGSSVAQINNYAKQIANLNDQISRMTGVGAGASPNDLLDQRDQLVSELNKIVGVEVSVQDGGTYNLTMANGYTLVQGSTARQLAAVPSSADPTRTTVAYVDEAAGNIEIPEKLLNTGSLGGLLTFRSQDLDQTRNTLGQLALAFADAFNAQHTKGYDADGNKGKDFFSIGSPVVYSNSNNADKTVSLTAKVVDSTKVQATDYKIVFDGTDWQVTRTADNTTFTATKDADGKLEIDGLKVTVGTGAQKNDSFLLKPVSNAIVDMNVKVTNEAEIAMASESKLDPDVDTGDSDNRNGQALLDLQNSNVVGGNKTFNDAYATLVSDVGNKTSTLKTSSTTQANVVKQLYKQQQSVSGVNLDEEYGNLQRYQQYYLANAQVLQTANALFDALLNIR</sequence>
<dbReference type="EMBL" id="AL513382">
    <property type="protein sequence ID" value="CAD08307.1"/>
    <property type="molecule type" value="Genomic_DNA"/>
</dbReference>
<dbReference type="EMBL" id="AE014613">
    <property type="protein sequence ID" value="AAO69361.1"/>
    <property type="molecule type" value="Genomic_DNA"/>
</dbReference>
<dbReference type="RefSeq" id="NP_455676.1">
    <property type="nucleotide sequence ID" value="NC_003198.1"/>
</dbReference>
<dbReference type="RefSeq" id="WP_000096425.1">
    <property type="nucleotide sequence ID" value="NZ_WSUR01000018.1"/>
</dbReference>
<dbReference type="SMR" id="P0A1J6"/>
<dbReference type="STRING" id="220341.gene:17585187"/>
<dbReference type="KEGG" id="stt:t1737"/>
<dbReference type="KEGG" id="sty:STY1222"/>
<dbReference type="PATRIC" id="fig|220341.7.peg.1223"/>
<dbReference type="eggNOG" id="COG1256">
    <property type="taxonomic scope" value="Bacteria"/>
</dbReference>
<dbReference type="HOGENOM" id="CLU_012762_0_1_6"/>
<dbReference type="OMA" id="MIQFQHA"/>
<dbReference type="OrthoDB" id="9802553at2"/>
<dbReference type="Proteomes" id="UP000000541">
    <property type="component" value="Chromosome"/>
</dbReference>
<dbReference type="Proteomes" id="UP000002670">
    <property type="component" value="Chromosome"/>
</dbReference>
<dbReference type="GO" id="GO:0009424">
    <property type="term" value="C:bacterial-type flagellum hook"/>
    <property type="evidence" value="ECO:0007669"/>
    <property type="project" value="InterPro"/>
</dbReference>
<dbReference type="GO" id="GO:0005576">
    <property type="term" value="C:extracellular region"/>
    <property type="evidence" value="ECO:0007669"/>
    <property type="project" value="UniProtKB-SubCell"/>
</dbReference>
<dbReference type="GO" id="GO:0005198">
    <property type="term" value="F:structural molecule activity"/>
    <property type="evidence" value="ECO:0007669"/>
    <property type="project" value="InterPro"/>
</dbReference>
<dbReference type="GO" id="GO:0044780">
    <property type="term" value="P:bacterial-type flagellum assembly"/>
    <property type="evidence" value="ECO:0007669"/>
    <property type="project" value="InterPro"/>
</dbReference>
<dbReference type="InterPro" id="IPR001444">
    <property type="entry name" value="Flag_bb_rod_N"/>
</dbReference>
<dbReference type="InterPro" id="IPR019776">
    <property type="entry name" value="Flagellar_basal_body_rod_CS"/>
</dbReference>
<dbReference type="InterPro" id="IPR010930">
    <property type="entry name" value="Flg_bb/hook_C_dom"/>
</dbReference>
<dbReference type="InterPro" id="IPR002371">
    <property type="entry name" value="FlgK"/>
</dbReference>
<dbReference type="InterPro" id="IPR049119">
    <property type="entry name" value="FlgK_D2-like"/>
</dbReference>
<dbReference type="InterPro" id="IPR053927">
    <property type="entry name" value="FlgK_helical"/>
</dbReference>
<dbReference type="NCBIfam" id="TIGR02492">
    <property type="entry name" value="flgK_ends"/>
    <property type="match status" value="1"/>
</dbReference>
<dbReference type="PANTHER" id="PTHR30033">
    <property type="entry name" value="FLAGELLAR HOOK-ASSOCIATED PROTEIN 1"/>
    <property type="match status" value="1"/>
</dbReference>
<dbReference type="PANTHER" id="PTHR30033:SF1">
    <property type="entry name" value="FLAGELLAR HOOK-ASSOCIATED PROTEIN 1"/>
    <property type="match status" value="1"/>
</dbReference>
<dbReference type="Pfam" id="PF00460">
    <property type="entry name" value="Flg_bb_rod"/>
    <property type="match status" value="1"/>
</dbReference>
<dbReference type="Pfam" id="PF06429">
    <property type="entry name" value="Flg_bbr_C"/>
    <property type="match status" value="1"/>
</dbReference>
<dbReference type="Pfam" id="PF21158">
    <property type="entry name" value="flgK_1st_1"/>
    <property type="match status" value="1"/>
</dbReference>
<dbReference type="Pfam" id="PF22638">
    <property type="entry name" value="FlgK_D1"/>
    <property type="match status" value="1"/>
</dbReference>
<dbReference type="PRINTS" id="PR01005">
    <property type="entry name" value="FLGHOOKAP1"/>
</dbReference>
<dbReference type="SUPFAM" id="SSF64518">
    <property type="entry name" value="Phase 1 flagellin"/>
    <property type="match status" value="1"/>
</dbReference>
<dbReference type="PROSITE" id="PS00588">
    <property type="entry name" value="FLAGELLA_BB_ROD"/>
    <property type="match status" value="1"/>
</dbReference>
<comment type="subcellular location">
    <subcellularLocation>
        <location evidence="1">Secreted</location>
    </subcellularLocation>
    <subcellularLocation>
        <location evidence="1">Bacterial flagellum</location>
    </subcellularLocation>
</comment>
<comment type="similarity">
    <text evidence="2">Belongs to the flagella basal body rod proteins family.</text>
</comment>
<keyword id="KW-0975">Bacterial flagellum</keyword>
<keyword id="KW-0964">Secreted</keyword>
<evidence type="ECO:0000250" key="1"/>
<evidence type="ECO:0000305" key="2"/>
<gene>
    <name type="primary">flgK</name>
    <name type="synonym">flaS</name>
    <name type="synonym">flaW</name>
    <name type="ordered locus">STY1222</name>
    <name type="ordered locus">t1737</name>
</gene>
<reference key="1">
    <citation type="journal article" date="2001" name="Nature">
        <title>Complete genome sequence of a multiple drug resistant Salmonella enterica serovar Typhi CT18.</title>
        <authorList>
            <person name="Parkhill J."/>
            <person name="Dougan G."/>
            <person name="James K.D."/>
            <person name="Thomson N.R."/>
            <person name="Pickard D."/>
            <person name="Wain J."/>
            <person name="Churcher C.M."/>
            <person name="Mungall K.L."/>
            <person name="Bentley S.D."/>
            <person name="Holden M.T.G."/>
            <person name="Sebaihia M."/>
            <person name="Baker S."/>
            <person name="Basham D."/>
            <person name="Brooks K."/>
            <person name="Chillingworth T."/>
            <person name="Connerton P."/>
            <person name="Cronin A."/>
            <person name="Davis P."/>
            <person name="Davies R.M."/>
            <person name="Dowd L."/>
            <person name="White N."/>
            <person name="Farrar J."/>
            <person name="Feltwell T."/>
            <person name="Hamlin N."/>
            <person name="Haque A."/>
            <person name="Hien T.T."/>
            <person name="Holroyd S."/>
            <person name="Jagels K."/>
            <person name="Krogh A."/>
            <person name="Larsen T.S."/>
            <person name="Leather S."/>
            <person name="Moule S."/>
            <person name="O'Gaora P."/>
            <person name="Parry C."/>
            <person name="Quail M.A."/>
            <person name="Rutherford K.M."/>
            <person name="Simmonds M."/>
            <person name="Skelton J."/>
            <person name="Stevens K."/>
            <person name="Whitehead S."/>
            <person name="Barrell B.G."/>
        </authorList>
    </citation>
    <scope>NUCLEOTIDE SEQUENCE [LARGE SCALE GENOMIC DNA]</scope>
    <source>
        <strain>CT18</strain>
    </source>
</reference>
<reference key="2">
    <citation type="journal article" date="2003" name="J. Bacteriol.">
        <title>Comparative genomics of Salmonella enterica serovar Typhi strains Ty2 and CT18.</title>
        <authorList>
            <person name="Deng W."/>
            <person name="Liou S.-R."/>
            <person name="Plunkett G. III"/>
            <person name="Mayhew G.F."/>
            <person name="Rose D.J."/>
            <person name="Burland V."/>
            <person name="Kodoyianni V."/>
            <person name="Schwartz D.C."/>
            <person name="Blattner F.R."/>
        </authorList>
    </citation>
    <scope>NUCLEOTIDE SEQUENCE [LARGE SCALE GENOMIC DNA]</scope>
    <source>
        <strain>ATCC 700931 / Ty2</strain>
    </source>
</reference>